<evidence type="ECO:0000250" key="1"/>
<evidence type="ECO:0000255" key="2"/>
<evidence type="ECO:0000305" key="3"/>
<comment type="function">
    <text evidence="1">Assembles around the rod to form the L-ring and probably protects the motor/basal body from shearing forces during rotation.</text>
</comment>
<comment type="subunit">
    <text evidence="1">The basal body constitutes a major portion of the flagellar organelle and consists of four rings (L,P,S, and M) mounted on a central rod.</text>
</comment>
<comment type="subcellular location">
    <subcellularLocation>
        <location evidence="1">Cell outer membrane</location>
    </subcellularLocation>
    <subcellularLocation>
        <location evidence="1">Bacterial flagellum basal body</location>
    </subcellularLocation>
</comment>
<comment type="similarity">
    <text evidence="3">Belongs to the FlgH family.</text>
</comment>
<keyword id="KW-0975">Bacterial flagellum</keyword>
<keyword id="KW-0998">Cell outer membrane</keyword>
<keyword id="KW-0472">Membrane</keyword>
<keyword id="KW-1185">Reference proteome</keyword>
<keyword id="KW-0732">Signal</keyword>
<dbReference type="EMBL" id="AE017125">
    <property type="protein sequence ID" value="AAP77496.1"/>
    <property type="molecule type" value="Genomic_DNA"/>
</dbReference>
<dbReference type="SMR" id="Q7VHR4"/>
<dbReference type="STRING" id="235279.HH_0899"/>
<dbReference type="KEGG" id="hhe:HH_0899"/>
<dbReference type="eggNOG" id="COG2063">
    <property type="taxonomic scope" value="Bacteria"/>
</dbReference>
<dbReference type="HOGENOM" id="CLU_069313_1_1_7"/>
<dbReference type="OrthoDB" id="9789227at2"/>
<dbReference type="Proteomes" id="UP000002495">
    <property type="component" value="Chromosome"/>
</dbReference>
<dbReference type="GO" id="GO:0009427">
    <property type="term" value="C:bacterial-type flagellum basal body, distal rod, L ring"/>
    <property type="evidence" value="ECO:0007669"/>
    <property type="project" value="InterPro"/>
</dbReference>
<dbReference type="GO" id="GO:0009279">
    <property type="term" value="C:cell outer membrane"/>
    <property type="evidence" value="ECO:0007669"/>
    <property type="project" value="UniProtKB-SubCell"/>
</dbReference>
<dbReference type="GO" id="GO:0003774">
    <property type="term" value="F:cytoskeletal motor activity"/>
    <property type="evidence" value="ECO:0007669"/>
    <property type="project" value="InterPro"/>
</dbReference>
<dbReference type="GO" id="GO:0071973">
    <property type="term" value="P:bacterial-type flagellum-dependent cell motility"/>
    <property type="evidence" value="ECO:0007669"/>
    <property type="project" value="InterPro"/>
</dbReference>
<dbReference type="HAMAP" id="MF_00415">
    <property type="entry name" value="FlgH"/>
    <property type="match status" value="1"/>
</dbReference>
<dbReference type="InterPro" id="IPR000527">
    <property type="entry name" value="Flag_Lring"/>
</dbReference>
<dbReference type="NCBIfam" id="NF001303">
    <property type="entry name" value="PRK00249.1-3"/>
    <property type="match status" value="1"/>
</dbReference>
<dbReference type="PANTHER" id="PTHR34933">
    <property type="entry name" value="FLAGELLAR L-RING PROTEIN"/>
    <property type="match status" value="1"/>
</dbReference>
<dbReference type="PANTHER" id="PTHR34933:SF1">
    <property type="entry name" value="FLAGELLAR L-RING PROTEIN"/>
    <property type="match status" value="1"/>
</dbReference>
<dbReference type="Pfam" id="PF02107">
    <property type="entry name" value="FlgH"/>
    <property type="match status" value="1"/>
</dbReference>
<dbReference type="PRINTS" id="PR01008">
    <property type="entry name" value="FLGLRINGFLGH"/>
</dbReference>
<organism>
    <name type="scientific">Helicobacter hepaticus (strain ATCC 51449 / 3B1)</name>
    <dbReference type="NCBI Taxonomy" id="235279"/>
    <lineage>
        <taxon>Bacteria</taxon>
        <taxon>Pseudomonadati</taxon>
        <taxon>Campylobacterota</taxon>
        <taxon>Epsilonproteobacteria</taxon>
        <taxon>Campylobacterales</taxon>
        <taxon>Helicobacteraceae</taxon>
        <taxon>Helicobacter</taxon>
    </lineage>
</organism>
<sequence length="244" mass="26840">MLIKSIGMYLIGILILFIALYPRHSFAFEPNIDFNAPDWVEERESADNDIPELPRAGSLFGSGDKPLFSDRRAMKPDDLITIVISENANANFTTNKNYNGASGGNVTPPSIEYTGNNEEQKQIVSELNDQAAYNLTKANNTSNFQGGGAQTRSEALNATITARIVKVLDNNTYFIHGRREVLVDGEKQILELSGVVRSFDISKDNVVQSKHIANAKIAYTSLGPISDTNHKKPVSDGIESLYPF</sequence>
<name>FLGH_HELHP</name>
<proteinExistence type="inferred from homology"/>
<protein>
    <recommendedName>
        <fullName>Flagellar L-ring protein</fullName>
    </recommendedName>
    <alternativeName>
        <fullName>Basal body L-ring protein</fullName>
    </alternativeName>
</protein>
<feature type="signal peptide" evidence="2">
    <location>
        <begin position="1"/>
        <end position="27"/>
    </location>
</feature>
<feature type="chain" id="PRO_0000009449" description="Flagellar L-ring protein">
    <location>
        <begin position="28"/>
        <end position="244"/>
    </location>
</feature>
<reference key="1">
    <citation type="journal article" date="2003" name="Proc. Natl. Acad. Sci. U.S.A.">
        <title>The complete genome sequence of the carcinogenic bacterium Helicobacter hepaticus.</title>
        <authorList>
            <person name="Suerbaum S."/>
            <person name="Josenhans C."/>
            <person name="Sterzenbach T."/>
            <person name="Drescher B."/>
            <person name="Brandt P."/>
            <person name="Bell M."/>
            <person name="Droege M."/>
            <person name="Fartmann B."/>
            <person name="Fischer H.-P."/>
            <person name="Ge Z."/>
            <person name="Hoerster A."/>
            <person name="Holland R."/>
            <person name="Klein K."/>
            <person name="Koenig J."/>
            <person name="Macko L."/>
            <person name="Mendz G.L."/>
            <person name="Nyakatura G."/>
            <person name="Schauer D.B."/>
            <person name="Shen Z."/>
            <person name="Weber J."/>
            <person name="Frosch M."/>
            <person name="Fox J.G."/>
        </authorList>
    </citation>
    <scope>NUCLEOTIDE SEQUENCE [LARGE SCALE GENOMIC DNA]</scope>
    <source>
        <strain>ATCC 51449 / 3B1</strain>
    </source>
</reference>
<gene>
    <name type="primary">flgH</name>
    <name type="ordered locus">HH_0899</name>
</gene>
<accession>Q7VHR4</accession>